<organism>
    <name type="scientific">Shigella flexneri</name>
    <dbReference type="NCBI Taxonomy" id="623"/>
    <lineage>
        <taxon>Bacteria</taxon>
        <taxon>Pseudomonadati</taxon>
        <taxon>Pseudomonadota</taxon>
        <taxon>Gammaproteobacteria</taxon>
        <taxon>Enterobacterales</taxon>
        <taxon>Enterobacteriaceae</taxon>
        <taxon>Shigella</taxon>
    </lineage>
</organism>
<name>E4PD_SHIFL</name>
<protein>
    <recommendedName>
        <fullName evidence="2">D-erythrose-4-phosphate dehydrogenase</fullName>
        <shortName evidence="2">E4PDH</shortName>
        <ecNumber evidence="2">1.2.1.72</ecNumber>
    </recommendedName>
</protein>
<feature type="initiator methionine" description="Removed" evidence="1">
    <location>
        <position position="1"/>
    </location>
</feature>
<feature type="chain" id="PRO_0000145679" description="D-erythrose-4-phosphate dehydrogenase">
    <location>
        <begin position="2"/>
        <end position="339"/>
    </location>
</feature>
<feature type="binding site" evidence="2">
    <location>
        <begin position="12"/>
        <end position="13"/>
    </location>
    <ligand>
        <name>NAD(+)</name>
        <dbReference type="ChEBI" id="CHEBI:57540"/>
    </ligand>
</feature>
<feature type="binding site" evidence="2">
    <location>
        <position position="81"/>
    </location>
    <ligand>
        <name>NAD(+)</name>
        <dbReference type="ChEBI" id="CHEBI:57540"/>
    </ligand>
</feature>
<feature type="binding site" evidence="2">
    <location>
        <begin position="154"/>
        <end position="156"/>
    </location>
    <ligand>
        <name>substrate</name>
    </ligand>
</feature>
<feature type="binding site" evidence="2">
    <location>
        <position position="200"/>
    </location>
    <ligand>
        <name>substrate</name>
    </ligand>
</feature>
<feature type="binding site" evidence="2">
    <location>
        <begin position="213"/>
        <end position="214"/>
    </location>
    <ligand>
        <name>substrate</name>
    </ligand>
</feature>
<feature type="binding site" evidence="2">
    <location>
        <position position="236"/>
    </location>
    <ligand>
        <name>substrate</name>
    </ligand>
</feature>
<feature type="binding site" evidence="2">
    <location>
        <position position="318"/>
    </location>
    <ligand>
        <name>NAD(+)</name>
        <dbReference type="ChEBI" id="CHEBI:57540"/>
    </ligand>
</feature>
<feature type="site" description="Activates thiol group during catalysis" evidence="2">
    <location>
        <position position="182"/>
    </location>
</feature>
<dbReference type="EC" id="1.2.1.72" evidence="2"/>
<dbReference type="EMBL" id="AE005674">
    <property type="protein sequence ID" value="AAN44394.2"/>
    <property type="molecule type" value="Genomic_DNA"/>
</dbReference>
<dbReference type="EMBL" id="AE014073">
    <property type="protein sequence ID" value="AAP18216.1"/>
    <property type="molecule type" value="Genomic_DNA"/>
</dbReference>
<dbReference type="RefSeq" id="NP_708687.2">
    <property type="nucleotide sequence ID" value="NC_004337.2"/>
</dbReference>
<dbReference type="RefSeq" id="WP_000218480.1">
    <property type="nucleotide sequence ID" value="NZ_WPGW01000018.1"/>
</dbReference>
<dbReference type="SMR" id="P0A9B9"/>
<dbReference type="STRING" id="198214.SF2912"/>
<dbReference type="PaxDb" id="198214-SF2912"/>
<dbReference type="GeneID" id="1025918"/>
<dbReference type="GeneID" id="93779071"/>
<dbReference type="KEGG" id="sfl:SF2912"/>
<dbReference type="KEGG" id="sfx:S3112"/>
<dbReference type="PATRIC" id="fig|198214.7.peg.3463"/>
<dbReference type="HOGENOM" id="CLU_030140_0_2_6"/>
<dbReference type="UniPathway" id="UPA00244">
    <property type="reaction ID" value="UER00309"/>
</dbReference>
<dbReference type="Proteomes" id="UP000001006">
    <property type="component" value="Chromosome"/>
</dbReference>
<dbReference type="Proteomes" id="UP000002673">
    <property type="component" value="Chromosome"/>
</dbReference>
<dbReference type="GO" id="GO:0005737">
    <property type="term" value="C:cytoplasm"/>
    <property type="evidence" value="ECO:0007669"/>
    <property type="project" value="UniProtKB-SubCell"/>
</dbReference>
<dbReference type="GO" id="GO:0048001">
    <property type="term" value="F:erythrose-4-phosphate dehydrogenase activity"/>
    <property type="evidence" value="ECO:0007669"/>
    <property type="project" value="UniProtKB-UniRule"/>
</dbReference>
<dbReference type="GO" id="GO:0051287">
    <property type="term" value="F:NAD binding"/>
    <property type="evidence" value="ECO:0007669"/>
    <property type="project" value="InterPro"/>
</dbReference>
<dbReference type="GO" id="GO:0042823">
    <property type="term" value="P:pyridoxal phosphate biosynthetic process"/>
    <property type="evidence" value="ECO:0007669"/>
    <property type="project" value="UniProtKB-UniRule"/>
</dbReference>
<dbReference type="GO" id="GO:0008615">
    <property type="term" value="P:pyridoxine biosynthetic process"/>
    <property type="evidence" value="ECO:0007669"/>
    <property type="project" value="UniProtKB-UniRule"/>
</dbReference>
<dbReference type="CDD" id="cd23937">
    <property type="entry name" value="GAPDH_C_E4PDH"/>
    <property type="match status" value="1"/>
</dbReference>
<dbReference type="CDD" id="cd17892">
    <property type="entry name" value="GAPDH_N_E4PDH"/>
    <property type="match status" value="1"/>
</dbReference>
<dbReference type="FunFam" id="3.30.360.10:FF:000007">
    <property type="entry name" value="D-erythrose-4-phosphate dehydrogenase"/>
    <property type="match status" value="1"/>
</dbReference>
<dbReference type="FunFam" id="3.40.50.720:FF:000001">
    <property type="entry name" value="Glyceraldehyde-3-phosphate dehydrogenase"/>
    <property type="match status" value="1"/>
</dbReference>
<dbReference type="Gene3D" id="3.30.360.10">
    <property type="entry name" value="Dihydrodipicolinate Reductase, domain 2"/>
    <property type="match status" value="1"/>
</dbReference>
<dbReference type="Gene3D" id="3.40.50.720">
    <property type="entry name" value="NAD(P)-binding Rossmann-like Domain"/>
    <property type="match status" value="1"/>
</dbReference>
<dbReference type="HAMAP" id="MF_01640">
    <property type="entry name" value="E4P_dehydrog"/>
    <property type="match status" value="1"/>
</dbReference>
<dbReference type="InterPro" id="IPR006422">
    <property type="entry name" value="E4P_DH_bac"/>
</dbReference>
<dbReference type="InterPro" id="IPR020831">
    <property type="entry name" value="GlycerAld/Erythrose_P_DH"/>
</dbReference>
<dbReference type="InterPro" id="IPR020830">
    <property type="entry name" value="GlycerAld_3-P_DH_AS"/>
</dbReference>
<dbReference type="InterPro" id="IPR020829">
    <property type="entry name" value="GlycerAld_3-P_DH_cat"/>
</dbReference>
<dbReference type="InterPro" id="IPR020828">
    <property type="entry name" value="GlycerAld_3-P_DH_NAD(P)-bd"/>
</dbReference>
<dbReference type="InterPro" id="IPR036291">
    <property type="entry name" value="NAD(P)-bd_dom_sf"/>
</dbReference>
<dbReference type="NCBIfam" id="TIGR01532">
    <property type="entry name" value="E4PD_g-proteo"/>
    <property type="match status" value="1"/>
</dbReference>
<dbReference type="NCBIfam" id="NF010058">
    <property type="entry name" value="PRK13535.1"/>
    <property type="match status" value="1"/>
</dbReference>
<dbReference type="PANTHER" id="PTHR43148">
    <property type="entry name" value="GLYCERALDEHYDE-3-PHOSPHATE DEHYDROGENASE 2"/>
    <property type="match status" value="1"/>
</dbReference>
<dbReference type="Pfam" id="PF02800">
    <property type="entry name" value="Gp_dh_C"/>
    <property type="match status" value="1"/>
</dbReference>
<dbReference type="Pfam" id="PF00044">
    <property type="entry name" value="Gp_dh_N"/>
    <property type="match status" value="1"/>
</dbReference>
<dbReference type="PIRSF" id="PIRSF000149">
    <property type="entry name" value="GAP_DH"/>
    <property type="match status" value="1"/>
</dbReference>
<dbReference type="PRINTS" id="PR00078">
    <property type="entry name" value="G3PDHDRGNASE"/>
</dbReference>
<dbReference type="SMART" id="SM00846">
    <property type="entry name" value="Gp_dh_N"/>
    <property type="match status" value="1"/>
</dbReference>
<dbReference type="SUPFAM" id="SSF55347">
    <property type="entry name" value="Glyceraldehyde-3-phosphate dehydrogenase-like, C-terminal domain"/>
    <property type="match status" value="1"/>
</dbReference>
<dbReference type="SUPFAM" id="SSF51735">
    <property type="entry name" value="NAD(P)-binding Rossmann-fold domains"/>
    <property type="match status" value="1"/>
</dbReference>
<dbReference type="PROSITE" id="PS00071">
    <property type="entry name" value="GAPDH"/>
    <property type="match status" value="1"/>
</dbReference>
<reference key="1">
    <citation type="journal article" date="2002" name="Nucleic Acids Res.">
        <title>Genome sequence of Shigella flexneri 2a: insights into pathogenicity through comparison with genomes of Escherichia coli K12 and O157.</title>
        <authorList>
            <person name="Jin Q."/>
            <person name="Yuan Z."/>
            <person name="Xu J."/>
            <person name="Wang Y."/>
            <person name="Shen Y."/>
            <person name="Lu W."/>
            <person name="Wang J."/>
            <person name="Liu H."/>
            <person name="Yang J."/>
            <person name="Yang F."/>
            <person name="Zhang X."/>
            <person name="Zhang J."/>
            <person name="Yang G."/>
            <person name="Wu H."/>
            <person name="Qu D."/>
            <person name="Dong J."/>
            <person name="Sun L."/>
            <person name="Xue Y."/>
            <person name="Zhao A."/>
            <person name="Gao Y."/>
            <person name="Zhu J."/>
            <person name="Kan B."/>
            <person name="Ding K."/>
            <person name="Chen S."/>
            <person name="Cheng H."/>
            <person name="Yao Z."/>
            <person name="He B."/>
            <person name="Chen R."/>
            <person name="Ma D."/>
            <person name="Qiang B."/>
            <person name="Wen Y."/>
            <person name="Hou Y."/>
            <person name="Yu J."/>
        </authorList>
    </citation>
    <scope>NUCLEOTIDE SEQUENCE [LARGE SCALE GENOMIC DNA]</scope>
    <source>
        <strain>301 / Serotype 2a</strain>
    </source>
</reference>
<reference key="2">
    <citation type="journal article" date="2003" name="Infect. Immun.">
        <title>Complete genome sequence and comparative genomics of Shigella flexneri serotype 2a strain 2457T.</title>
        <authorList>
            <person name="Wei J."/>
            <person name="Goldberg M.B."/>
            <person name="Burland V."/>
            <person name="Venkatesan M.M."/>
            <person name="Deng W."/>
            <person name="Fournier G."/>
            <person name="Mayhew G.F."/>
            <person name="Plunkett G. III"/>
            <person name="Rose D.J."/>
            <person name="Darling A."/>
            <person name="Mau B."/>
            <person name="Perna N.T."/>
            <person name="Payne S.M."/>
            <person name="Runyen-Janecky L.J."/>
            <person name="Zhou S."/>
            <person name="Schwartz D.C."/>
            <person name="Blattner F.R."/>
        </authorList>
    </citation>
    <scope>NUCLEOTIDE SEQUENCE [LARGE SCALE GENOMIC DNA]</scope>
    <source>
        <strain>ATCC 700930 / 2457T / Serotype 2a</strain>
    </source>
</reference>
<proteinExistence type="inferred from homology"/>
<sequence>MTVRVAINGFGRIGRNVVRALYESGRRAEITVVAINELADAAGMAHLLKYDTSHGRFAWEVRQERDQLFVGDDAIRVLHERSLQSLPWRELGVDVVLDCTGVYGSREHGEAHIAAGAKKVLFSHPGSNDLDATVVYGVNQDQLRAEHRIVSNASCTTNCIIPVIKLLDDAYGIESGTVTTIHSAMHDQQVIDAYHPDLRRTRAASQSIIPVDTKLAAGITRFFPQFNDRFEAIAVRVPTINVTAIDLSVTVKKPVKANEVNLLLQKAAQGAFHGIVDYTELPLVSVDFNHDPHSAIVDGTQTRVSGAHLIKTLVWCDNEWGFANRMLDTTLAMATVAFR</sequence>
<keyword id="KW-0963">Cytoplasm</keyword>
<keyword id="KW-0520">NAD</keyword>
<keyword id="KW-0560">Oxidoreductase</keyword>
<keyword id="KW-0664">Pyridoxine biosynthesis</keyword>
<keyword id="KW-1185">Reference proteome</keyword>
<accession>P0A9B9</accession>
<accession>P11603</accession>
<evidence type="ECO:0000250" key="1"/>
<evidence type="ECO:0000255" key="2">
    <source>
        <dbReference type="HAMAP-Rule" id="MF_01640"/>
    </source>
</evidence>
<evidence type="ECO:0000305" key="3"/>
<comment type="function">
    <text evidence="2">Catalyzes the NAD-dependent conversion of D-erythrose 4-phosphate to 4-phosphoerythronate.</text>
</comment>
<comment type="catalytic activity">
    <reaction evidence="2">
        <text>D-erythrose 4-phosphate + NAD(+) + H2O = 4-phospho-D-erythronate + NADH + 2 H(+)</text>
        <dbReference type="Rhea" id="RHEA:12056"/>
        <dbReference type="ChEBI" id="CHEBI:15377"/>
        <dbReference type="ChEBI" id="CHEBI:15378"/>
        <dbReference type="ChEBI" id="CHEBI:16897"/>
        <dbReference type="ChEBI" id="CHEBI:57540"/>
        <dbReference type="ChEBI" id="CHEBI:57945"/>
        <dbReference type="ChEBI" id="CHEBI:58766"/>
        <dbReference type="EC" id="1.2.1.72"/>
    </reaction>
</comment>
<comment type="pathway">
    <text evidence="2">Cofactor biosynthesis; pyridoxine 5'-phosphate biosynthesis; pyridoxine 5'-phosphate from D-erythrose 4-phosphate: step 1/5.</text>
</comment>
<comment type="subunit">
    <text evidence="2">Homotetramer.</text>
</comment>
<comment type="subcellular location">
    <subcellularLocation>
        <location evidence="2">Cytoplasm</location>
    </subcellularLocation>
</comment>
<comment type="similarity">
    <text evidence="3">Belongs to the glyceraldehyde-3-phosphate dehydrogenase family.</text>
</comment>
<gene>
    <name evidence="2" type="primary">epd</name>
    <name type="ordered locus">SF2911.1</name>
    <name type="ordered locus">S3112</name>
</gene>